<protein>
    <recommendedName>
        <fullName evidence="1">Pyridoxine 5'-phosphate synthase</fullName>
        <shortName evidence="1">PNP synthase</shortName>
        <ecNumber evidence="1">2.6.99.2</ecNumber>
    </recommendedName>
</protein>
<sequence>MAKLGLNVDHIATVRQARGGSEPDPVTAAAIGELAGAEGITIHLREDRRHIQDRDLEILRRTVQTKLNLEMAATDEMVGIACRIRPEQCTLVPEKRQELTTEGGLDVLGNLAGITRATSSLREAGIVVSLFVDPTVEQIRASKESGADAIEIHTGRYAEARSEKSRHHELAAIREAIRLGNELGLTVHAGHGLNYVNILPLTGLAGIEEFNIGHSIISRAMLVGLDRAVREMVTLIRRP</sequence>
<gene>
    <name evidence="1" type="primary">pdxJ</name>
    <name type="ordered locus">Glov_2526</name>
</gene>
<keyword id="KW-0963">Cytoplasm</keyword>
<keyword id="KW-0664">Pyridoxine biosynthesis</keyword>
<keyword id="KW-1185">Reference proteome</keyword>
<keyword id="KW-0808">Transferase</keyword>
<accession>B3E693</accession>
<dbReference type="EC" id="2.6.99.2" evidence="1"/>
<dbReference type="EMBL" id="CP001089">
    <property type="protein sequence ID" value="ACD96240.1"/>
    <property type="molecule type" value="Genomic_DNA"/>
</dbReference>
<dbReference type="RefSeq" id="WP_012470572.1">
    <property type="nucleotide sequence ID" value="NC_010814.1"/>
</dbReference>
<dbReference type="SMR" id="B3E693"/>
<dbReference type="STRING" id="398767.Glov_2526"/>
<dbReference type="KEGG" id="glo:Glov_2526"/>
<dbReference type="eggNOG" id="COG0854">
    <property type="taxonomic scope" value="Bacteria"/>
</dbReference>
<dbReference type="HOGENOM" id="CLU_074563_0_0_7"/>
<dbReference type="OrthoDB" id="9806590at2"/>
<dbReference type="UniPathway" id="UPA00244">
    <property type="reaction ID" value="UER00313"/>
</dbReference>
<dbReference type="Proteomes" id="UP000002420">
    <property type="component" value="Chromosome"/>
</dbReference>
<dbReference type="GO" id="GO:0005829">
    <property type="term" value="C:cytosol"/>
    <property type="evidence" value="ECO:0007669"/>
    <property type="project" value="TreeGrafter"/>
</dbReference>
<dbReference type="GO" id="GO:0033856">
    <property type="term" value="F:pyridoxine 5'-phosphate synthase activity"/>
    <property type="evidence" value="ECO:0007669"/>
    <property type="project" value="UniProtKB-EC"/>
</dbReference>
<dbReference type="GO" id="GO:0008615">
    <property type="term" value="P:pyridoxine biosynthetic process"/>
    <property type="evidence" value="ECO:0007669"/>
    <property type="project" value="UniProtKB-UniRule"/>
</dbReference>
<dbReference type="CDD" id="cd00003">
    <property type="entry name" value="PNPsynthase"/>
    <property type="match status" value="1"/>
</dbReference>
<dbReference type="Gene3D" id="3.20.20.70">
    <property type="entry name" value="Aldolase class I"/>
    <property type="match status" value="1"/>
</dbReference>
<dbReference type="HAMAP" id="MF_00279">
    <property type="entry name" value="PdxJ"/>
    <property type="match status" value="1"/>
</dbReference>
<dbReference type="InterPro" id="IPR013785">
    <property type="entry name" value="Aldolase_TIM"/>
</dbReference>
<dbReference type="InterPro" id="IPR004569">
    <property type="entry name" value="PyrdxlP_synth_PdxJ"/>
</dbReference>
<dbReference type="InterPro" id="IPR036130">
    <property type="entry name" value="Pyridoxine-5'_phos_synth"/>
</dbReference>
<dbReference type="NCBIfam" id="TIGR00559">
    <property type="entry name" value="pdxJ"/>
    <property type="match status" value="1"/>
</dbReference>
<dbReference type="NCBIfam" id="NF003625">
    <property type="entry name" value="PRK05265.1-3"/>
    <property type="match status" value="1"/>
</dbReference>
<dbReference type="NCBIfam" id="NF003627">
    <property type="entry name" value="PRK05265.1-5"/>
    <property type="match status" value="1"/>
</dbReference>
<dbReference type="PANTHER" id="PTHR30456">
    <property type="entry name" value="PYRIDOXINE 5'-PHOSPHATE SYNTHASE"/>
    <property type="match status" value="1"/>
</dbReference>
<dbReference type="PANTHER" id="PTHR30456:SF0">
    <property type="entry name" value="PYRIDOXINE 5'-PHOSPHATE SYNTHASE"/>
    <property type="match status" value="1"/>
</dbReference>
<dbReference type="Pfam" id="PF03740">
    <property type="entry name" value="PdxJ"/>
    <property type="match status" value="1"/>
</dbReference>
<dbReference type="SUPFAM" id="SSF63892">
    <property type="entry name" value="Pyridoxine 5'-phosphate synthase"/>
    <property type="match status" value="1"/>
</dbReference>
<comment type="function">
    <text evidence="1">Catalyzes the complicated ring closure reaction between the two acyclic compounds 1-deoxy-D-xylulose-5-phosphate (DXP) and 3-amino-2-oxopropyl phosphate (1-amino-acetone-3-phosphate or AAP) to form pyridoxine 5'-phosphate (PNP) and inorganic phosphate.</text>
</comment>
<comment type="catalytic activity">
    <reaction evidence="1">
        <text>3-amino-2-oxopropyl phosphate + 1-deoxy-D-xylulose 5-phosphate = pyridoxine 5'-phosphate + phosphate + 2 H2O + H(+)</text>
        <dbReference type="Rhea" id="RHEA:15265"/>
        <dbReference type="ChEBI" id="CHEBI:15377"/>
        <dbReference type="ChEBI" id="CHEBI:15378"/>
        <dbReference type="ChEBI" id="CHEBI:43474"/>
        <dbReference type="ChEBI" id="CHEBI:57279"/>
        <dbReference type="ChEBI" id="CHEBI:57792"/>
        <dbReference type="ChEBI" id="CHEBI:58589"/>
        <dbReference type="EC" id="2.6.99.2"/>
    </reaction>
</comment>
<comment type="pathway">
    <text evidence="1">Cofactor biosynthesis; pyridoxine 5'-phosphate biosynthesis; pyridoxine 5'-phosphate from D-erythrose 4-phosphate: step 5/5.</text>
</comment>
<comment type="subunit">
    <text evidence="1">Homooctamer; tetramer of dimers.</text>
</comment>
<comment type="subcellular location">
    <subcellularLocation>
        <location evidence="1">Cytoplasm</location>
    </subcellularLocation>
</comment>
<comment type="similarity">
    <text evidence="1">Belongs to the PNP synthase family.</text>
</comment>
<organism>
    <name type="scientific">Trichlorobacter lovleyi (strain ATCC BAA-1151 / DSM 17278 / SZ)</name>
    <name type="common">Geobacter lovleyi</name>
    <dbReference type="NCBI Taxonomy" id="398767"/>
    <lineage>
        <taxon>Bacteria</taxon>
        <taxon>Pseudomonadati</taxon>
        <taxon>Thermodesulfobacteriota</taxon>
        <taxon>Desulfuromonadia</taxon>
        <taxon>Geobacterales</taxon>
        <taxon>Geobacteraceae</taxon>
        <taxon>Trichlorobacter</taxon>
    </lineage>
</organism>
<feature type="chain" id="PRO_1000114810" description="Pyridoxine 5'-phosphate synthase">
    <location>
        <begin position="1"/>
        <end position="239"/>
    </location>
</feature>
<feature type="active site" description="Proton acceptor" evidence="1">
    <location>
        <position position="43"/>
    </location>
</feature>
<feature type="active site" description="Proton acceptor" evidence="1">
    <location>
        <position position="70"/>
    </location>
</feature>
<feature type="active site" description="Proton donor" evidence="1">
    <location>
        <position position="191"/>
    </location>
</feature>
<feature type="binding site" evidence="1">
    <location>
        <position position="7"/>
    </location>
    <ligand>
        <name>3-amino-2-oxopropyl phosphate</name>
        <dbReference type="ChEBI" id="CHEBI:57279"/>
    </ligand>
</feature>
<feature type="binding site" evidence="1">
    <location>
        <begin position="9"/>
        <end position="10"/>
    </location>
    <ligand>
        <name>1-deoxy-D-xylulose 5-phosphate</name>
        <dbReference type="ChEBI" id="CHEBI:57792"/>
    </ligand>
</feature>
<feature type="binding site" evidence="1">
    <location>
        <position position="18"/>
    </location>
    <ligand>
        <name>3-amino-2-oxopropyl phosphate</name>
        <dbReference type="ChEBI" id="CHEBI:57279"/>
    </ligand>
</feature>
<feature type="binding site" evidence="1">
    <location>
        <position position="45"/>
    </location>
    <ligand>
        <name>1-deoxy-D-xylulose 5-phosphate</name>
        <dbReference type="ChEBI" id="CHEBI:57792"/>
    </ligand>
</feature>
<feature type="binding site" evidence="1">
    <location>
        <position position="50"/>
    </location>
    <ligand>
        <name>1-deoxy-D-xylulose 5-phosphate</name>
        <dbReference type="ChEBI" id="CHEBI:57792"/>
    </ligand>
</feature>
<feature type="binding site" evidence="1">
    <location>
        <position position="100"/>
    </location>
    <ligand>
        <name>1-deoxy-D-xylulose 5-phosphate</name>
        <dbReference type="ChEBI" id="CHEBI:57792"/>
    </ligand>
</feature>
<feature type="binding site" evidence="1">
    <location>
        <position position="192"/>
    </location>
    <ligand>
        <name>3-amino-2-oxopropyl phosphate</name>
        <dbReference type="ChEBI" id="CHEBI:57279"/>
    </ligand>
</feature>
<feature type="binding site" evidence="1">
    <location>
        <begin position="213"/>
        <end position="214"/>
    </location>
    <ligand>
        <name>3-amino-2-oxopropyl phosphate</name>
        <dbReference type="ChEBI" id="CHEBI:57279"/>
    </ligand>
</feature>
<feature type="site" description="Transition state stabilizer" evidence="1">
    <location>
        <position position="151"/>
    </location>
</feature>
<proteinExistence type="inferred from homology"/>
<evidence type="ECO:0000255" key="1">
    <source>
        <dbReference type="HAMAP-Rule" id="MF_00279"/>
    </source>
</evidence>
<reference key="1">
    <citation type="submission" date="2008-05" db="EMBL/GenBank/DDBJ databases">
        <title>Complete sequence of chromosome of Geobacter lovleyi SZ.</title>
        <authorList>
            <consortium name="US DOE Joint Genome Institute"/>
            <person name="Lucas S."/>
            <person name="Copeland A."/>
            <person name="Lapidus A."/>
            <person name="Glavina del Rio T."/>
            <person name="Dalin E."/>
            <person name="Tice H."/>
            <person name="Bruce D."/>
            <person name="Goodwin L."/>
            <person name="Pitluck S."/>
            <person name="Chertkov O."/>
            <person name="Meincke L."/>
            <person name="Brettin T."/>
            <person name="Detter J.C."/>
            <person name="Han C."/>
            <person name="Tapia R."/>
            <person name="Kuske C.R."/>
            <person name="Schmutz J."/>
            <person name="Larimer F."/>
            <person name="Land M."/>
            <person name="Hauser L."/>
            <person name="Kyrpides N."/>
            <person name="Mikhailova N."/>
            <person name="Sung Y."/>
            <person name="Fletcher K.E."/>
            <person name="Ritalahti K.M."/>
            <person name="Loeffler F.E."/>
            <person name="Richardson P."/>
        </authorList>
    </citation>
    <scope>NUCLEOTIDE SEQUENCE [LARGE SCALE GENOMIC DNA]</scope>
    <source>
        <strain>ATCC BAA-1151 / DSM 17278 / SZ</strain>
    </source>
</reference>
<name>PDXJ_TRIL1</name>